<organism>
    <name type="scientific">Hydrogenovibrio crunogenus (strain DSM 25203 / XCL-2)</name>
    <name type="common">Thiomicrospira crunogena</name>
    <dbReference type="NCBI Taxonomy" id="317025"/>
    <lineage>
        <taxon>Bacteria</taxon>
        <taxon>Pseudomonadati</taxon>
        <taxon>Pseudomonadota</taxon>
        <taxon>Gammaproteobacteria</taxon>
        <taxon>Thiotrichales</taxon>
        <taxon>Piscirickettsiaceae</taxon>
        <taxon>Hydrogenovibrio</taxon>
    </lineage>
</organism>
<proteinExistence type="inferred from homology"/>
<gene>
    <name evidence="1" type="primary">rpsU</name>
    <name type="ordered locus">Tcr_1809</name>
</gene>
<name>RS21_HYDCU</name>
<reference key="1">
    <citation type="journal article" date="2006" name="PLoS Biol.">
        <title>The genome of deep-sea vent chemolithoautotroph Thiomicrospira crunogena XCL-2.</title>
        <authorList>
            <person name="Scott K.M."/>
            <person name="Sievert S.M."/>
            <person name="Abril F.N."/>
            <person name="Ball L.A."/>
            <person name="Barrett C.J."/>
            <person name="Blake R.A."/>
            <person name="Boller A.J."/>
            <person name="Chain P.S.G."/>
            <person name="Clark J.A."/>
            <person name="Davis C.R."/>
            <person name="Detter C."/>
            <person name="Do K.F."/>
            <person name="Dobrinski K.P."/>
            <person name="Faza B.I."/>
            <person name="Fitzpatrick K.A."/>
            <person name="Freyermuth S.K."/>
            <person name="Harmer T.L."/>
            <person name="Hauser L.J."/>
            <person name="Huegler M."/>
            <person name="Kerfeld C.A."/>
            <person name="Klotz M.G."/>
            <person name="Kong W.W."/>
            <person name="Land M."/>
            <person name="Lapidus A."/>
            <person name="Larimer F.W."/>
            <person name="Longo D.L."/>
            <person name="Lucas S."/>
            <person name="Malfatti S.A."/>
            <person name="Massey S.E."/>
            <person name="Martin D.D."/>
            <person name="McCuddin Z."/>
            <person name="Meyer F."/>
            <person name="Moore J.L."/>
            <person name="Ocampo L.H. Jr."/>
            <person name="Paul J.H."/>
            <person name="Paulsen I.T."/>
            <person name="Reep D.K."/>
            <person name="Ren Q."/>
            <person name="Ross R.L."/>
            <person name="Sato P.Y."/>
            <person name="Thomas P."/>
            <person name="Tinkham L.E."/>
            <person name="Zeruth G.T."/>
        </authorList>
    </citation>
    <scope>NUCLEOTIDE SEQUENCE [LARGE SCALE GENOMIC DNA]</scope>
    <source>
        <strain>DSM 25203 / XCL-2</strain>
    </source>
</reference>
<keyword id="KW-0687">Ribonucleoprotein</keyword>
<keyword id="KW-0689">Ribosomal protein</keyword>
<evidence type="ECO:0000255" key="1">
    <source>
        <dbReference type="HAMAP-Rule" id="MF_00358"/>
    </source>
</evidence>
<evidence type="ECO:0000305" key="2"/>
<comment type="similarity">
    <text evidence="1">Belongs to the bacterial ribosomal protein bS21 family.</text>
</comment>
<sequence>MPSVKVRDTEPFDVALRRFKRACEKAGVLTESRKREFYEKPTWARKRMKAAAVKRLAKRLSRENRRTTRMY</sequence>
<feature type="chain" id="PRO_0000266793" description="Small ribosomal subunit protein bS21">
    <location>
        <begin position="1"/>
        <end position="71"/>
    </location>
</feature>
<accession>Q31EM2</accession>
<protein>
    <recommendedName>
        <fullName evidence="1">Small ribosomal subunit protein bS21</fullName>
    </recommendedName>
    <alternativeName>
        <fullName evidence="2">30S ribosomal protein S21</fullName>
    </alternativeName>
</protein>
<dbReference type="EMBL" id="CP000109">
    <property type="protein sequence ID" value="ABB42401.1"/>
    <property type="molecule type" value="Genomic_DNA"/>
</dbReference>
<dbReference type="SMR" id="Q31EM2"/>
<dbReference type="STRING" id="317025.Tcr_1809"/>
<dbReference type="KEGG" id="tcx:Tcr_1809"/>
<dbReference type="eggNOG" id="COG0828">
    <property type="taxonomic scope" value="Bacteria"/>
</dbReference>
<dbReference type="HOGENOM" id="CLU_159258_1_0_6"/>
<dbReference type="OrthoDB" id="9799244at2"/>
<dbReference type="GO" id="GO:1990904">
    <property type="term" value="C:ribonucleoprotein complex"/>
    <property type="evidence" value="ECO:0007669"/>
    <property type="project" value="UniProtKB-KW"/>
</dbReference>
<dbReference type="GO" id="GO:0005840">
    <property type="term" value="C:ribosome"/>
    <property type="evidence" value="ECO:0007669"/>
    <property type="project" value="UniProtKB-KW"/>
</dbReference>
<dbReference type="GO" id="GO:0003735">
    <property type="term" value="F:structural constituent of ribosome"/>
    <property type="evidence" value="ECO:0007669"/>
    <property type="project" value="InterPro"/>
</dbReference>
<dbReference type="GO" id="GO:0006412">
    <property type="term" value="P:translation"/>
    <property type="evidence" value="ECO:0007669"/>
    <property type="project" value="UniProtKB-UniRule"/>
</dbReference>
<dbReference type="Gene3D" id="1.20.5.1150">
    <property type="entry name" value="Ribosomal protein S8"/>
    <property type="match status" value="1"/>
</dbReference>
<dbReference type="HAMAP" id="MF_00358">
    <property type="entry name" value="Ribosomal_bS21"/>
    <property type="match status" value="1"/>
</dbReference>
<dbReference type="InterPro" id="IPR001911">
    <property type="entry name" value="Ribosomal_bS21"/>
</dbReference>
<dbReference type="InterPro" id="IPR018278">
    <property type="entry name" value="Ribosomal_bS21_CS"/>
</dbReference>
<dbReference type="InterPro" id="IPR038380">
    <property type="entry name" value="Ribosomal_bS21_sf"/>
</dbReference>
<dbReference type="NCBIfam" id="TIGR00030">
    <property type="entry name" value="S21p"/>
    <property type="match status" value="1"/>
</dbReference>
<dbReference type="PANTHER" id="PTHR21109">
    <property type="entry name" value="MITOCHONDRIAL 28S RIBOSOMAL PROTEIN S21"/>
    <property type="match status" value="1"/>
</dbReference>
<dbReference type="PANTHER" id="PTHR21109:SF22">
    <property type="entry name" value="SMALL RIBOSOMAL SUBUNIT PROTEIN BS21"/>
    <property type="match status" value="1"/>
</dbReference>
<dbReference type="Pfam" id="PF01165">
    <property type="entry name" value="Ribosomal_S21"/>
    <property type="match status" value="1"/>
</dbReference>
<dbReference type="PRINTS" id="PR00976">
    <property type="entry name" value="RIBOSOMALS21"/>
</dbReference>
<dbReference type="PROSITE" id="PS01181">
    <property type="entry name" value="RIBOSOMAL_S21"/>
    <property type="match status" value="1"/>
</dbReference>